<evidence type="ECO:0000255" key="1">
    <source>
        <dbReference type="HAMAP-Rule" id="MF_00468"/>
    </source>
</evidence>
<feature type="chain" id="PRO_0000204346" description="Sulfate transporter CysZ">
    <location>
        <begin position="1"/>
        <end position="253"/>
    </location>
</feature>
<feature type="transmembrane region" description="Helical" evidence="1">
    <location>
        <begin position="27"/>
        <end position="47"/>
    </location>
</feature>
<feature type="transmembrane region" description="Helical" evidence="1">
    <location>
        <begin position="71"/>
        <end position="91"/>
    </location>
</feature>
<feature type="transmembrane region" description="Helical" evidence="1">
    <location>
        <begin position="150"/>
        <end position="170"/>
    </location>
</feature>
<feature type="transmembrane region" description="Helical" evidence="1">
    <location>
        <begin position="211"/>
        <end position="231"/>
    </location>
</feature>
<dbReference type="EMBL" id="AE016853">
    <property type="protein sequence ID" value="AAO54704.1"/>
    <property type="molecule type" value="Genomic_DNA"/>
</dbReference>
<dbReference type="RefSeq" id="NP_791009.1">
    <property type="nucleotide sequence ID" value="NC_004578.1"/>
</dbReference>
<dbReference type="RefSeq" id="WP_007244082.1">
    <property type="nucleotide sequence ID" value="NC_004578.1"/>
</dbReference>
<dbReference type="SMR" id="Q887V6"/>
<dbReference type="STRING" id="223283.PSPTO_1177"/>
<dbReference type="GeneID" id="1182813"/>
<dbReference type="KEGG" id="pst:PSPTO_1177"/>
<dbReference type="PATRIC" id="fig|223283.9.peg.1193"/>
<dbReference type="eggNOG" id="COG2981">
    <property type="taxonomic scope" value="Bacteria"/>
</dbReference>
<dbReference type="HOGENOM" id="CLU_070331_1_0_6"/>
<dbReference type="OrthoDB" id="5292355at2"/>
<dbReference type="PhylomeDB" id="Q887V6"/>
<dbReference type="Proteomes" id="UP000002515">
    <property type="component" value="Chromosome"/>
</dbReference>
<dbReference type="GO" id="GO:0005886">
    <property type="term" value="C:plasma membrane"/>
    <property type="evidence" value="ECO:0007669"/>
    <property type="project" value="UniProtKB-SubCell"/>
</dbReference>
<dbReference type="GO" id="GO:0009675">
    <property type="term" value="F:high-affinity sulfate:proton symporter activity"/>
    <property type="evidence" value="ECO:0007669"/>
    <property type="project" value="TreeGrafter"/>
</dbReference>
<dbReference type="GO" id="GO:0019344">
    <property type="term" value="P:cysteine biosynthetic process"/>
    <property type="evidence" value="ECO:0007669"/>
    <property type="project" value="UniProtKB-UniRule"/>
</dbReference>
<dbReference type="GO" id="GO:0000103">
    <property type="term" value="P:sulfate assimilation"/>
    <property type="evidence" value="ECO:0007669"/>
    <property type="project" value="InterPro"/>
</dbReference>
<dbReference type="HAMAP" id="MF_00468">
    <property type="entry name" value="CysZ"/>
    <property type="match status" value="1"/>
</dbReference>
<dbReference type="InterPro" id="IPR050480">
    <property type="entry name" value="CysZ_sulfate_transptr"/>
</dbReference>
<dbReference type="InterPro" id="IPR022985">
    <property type="entry name" value="Sulfate_CysZ"/>
</dbReference>
<dbReference type="NCBIfam" id="NF003433">
    <property type="entry name" value="PRK04949.1"/>
    <property type="match status" value="1"/>
</dbReference>
<dbReference type="PANTHER" id="PTHR37468">
    <property type="entry name" value="SULFATE TRANSPORTER CYSZ"/>
    <property type="match status" value="1"/>
</dbReference>
<dbReference type="PANTHER" id="PTHR37468:SF1">
    <property type="entry name" value="SULFATE TRANSPORTER CYSZ"/>
    <property type="match status" value="1"/>
</dbReference>
<dbReference type="Pfam" id="PF07264">
    <property type="entry name" value="EI24"/>
    <property type="match status" value="1"/>
</dbReference>
<comment type="function">
    <text evidence="1">High affinity, high specificity proton-dependent sulfate transporter, which mediates sulfate uptake. Provides the sulfur source for the cysteine synthesis pathway.</text>
</comment>
<comment type="subcellular location">
    <subcellularLocation>
        <location evidence="1">Cell inner membrane</location>
        <topology evidence="1">Multi-pass membrane protein</topology>
    </subcellularLocation>
</comment>
<comment type="similarity">
    <text evidence="1">Belongs to the CysZ family.</text>
</comment>
<proteinExistence type="inferred from homology"/>
<sequence length="253" mass="28487">MPAPALTGPQYLREGLKLILSPGLRLFVLLPLSINIVLFCGLIYLAVHQFELWVDTFMPTLPHWLSFLSYILWPLFVALVLLMVFFTFTVVANIIAAPFNGFLSEKVEAVIRGVDESPDFSWAELVAMVPRTLAREARKLGYMLPRMLGLFILSFIPVANIIAAPLWLLFGVWMMAIQYIDYPADNHKLGWNEMLGWLKSKRWQSLSFGGIVYVALLIPVVNLLMMPAAVAAATLFWVRERGADALPIAHARD</sequence>
<protein>
    <recommendedName>
        <fullName evidence="1">Sulfate transporter CysZ</fullName>
    </recommendedName>
</protein>
<gene>
    <name evidence="1" type="primary">cysZ</name>
    <name type="ordered locus">PSPTO_1177</name>
</gene>
<reference key="1">
    <citation type="journal article" date="2003" name="Proc. Natl. Acad. Sci. U.S.A.">
        <title>The complete genome sequence of the Arabidopsis and tomato pathogen Pseudomonas syringae pv. tomato DC3000.</title>
        <authorList>
            <person name="Buell C.R."/>
            <person name="Joardar V."/>
            <person name="Lindeberg M."/>
            <person name="Selengut J."/>
            <person name="Paulsen I.T."/>
            <person name="Gwinn M.L."/>
            <person name="Dodson R.J."/>
            <person name="DeBoy R.T."/>
            <person name="Durkin A.S."/>
            <person name="Kolonay J.F."/>
            <person name="Madupu R."/>
            <person name="Daugherty S.C."/>
            <person name="Brinkac L.M."/>
            <person name="Beanan M.J."/>
            <person name="Haft D.H."/>
            <person name="Nelson W.C."/>
            <person name="Davidsen T.M."/>
            <person name="Zafar N."/>
            <person name="Zhou L."/>
            <person name="Liu J."/>
            <person name="Yuan Q."/>
            <person name="Khouri H.M."/>
            <person name="Fedorova N.B."/>
            <person name="Tran B."/>
            <person name="Russell D."/>
            <person name="Berry K.J."/>
            <person name="Utterback T.R."/>
            <person name="Van Aken S.E."/>
            <person name="Feldblyum T.V."/>
            <person name="D'Ascenzo M."/>
            <person name="Deng W.-L."/>
            <person name="Ramos A.R."/>
            <person name="Alfano J.R."/>
            <person name="Cartinhour S."/>
            <person name="Chatterjee A.K."/>
            <person name="Delaney T.P."/>
            <person name="Lazarowitz S.G."/>
            <person name="Martin G.B."/>
            <person name="Schneider D.J."/>
            <person name="Tang X."/>
            <person name="Bender C.L."/>
            <person name="White O."/>
            <person name="Fraser C.M."/>
            <person name="Collmer A."/>
        </authorList>
    </citation>
    <scope>NUCLEOTIDE SEQUENCE [LARGE SCALE GENOMIC DNA]</scope>
    <source>
        <strain>ATCC BAA-871 / DC3000</strain>
    </source>
</reference>
<organism>
    <name type="scientific">Pseudomonas syringae pv. tomato (strain ATCC BAA-871 / DC3000)</name>
    <dbReference type="NCBI Taxonomy" id="223283"/>
    <lineage>
        <taxon>Bacteria</taxon>
        <taxon>Pseudomonadati</taxon>
        <taxon>Pseudomonadota</taxon>
        <taxon>Gammaproteobacteria</taxon>
        <taxon>Pseudomonadales</taxon>
        <taxon>Pseudomonadaceae</taxon>
        <taxon>Pseudomonas</taxon>
    </lineage>
</organism>
<name>CYSZ_PSESM</name>
<keyword id="KW-0028">Amino-acid biosynthesis</keyword>
<keyword id="KW-0997">Cell inner membrane</keyword>
<keyword id="KW-1003">Cell membrane</keyword>
<keyword id="KW-0198">Cysteine biosynthesis</keyword>
<keyword id="KW-0472">Membrane</keyword>
<keyword id="KW-1185">Reference proteome</keyword>
<keyword id="KW-0764">Sulfate transport</keyword>
<keyword id="KW-0812">Transmembrane</keyword>
<keyword id="KW-1133">Transmembrane helix</keyword>
<keyword id="KW-0813">Transport</keyword>
<accession>Q887V6</accession>